<dbReference type="EC" id="2.6.1.19" evidence="4 6"/>
<dbReference type="EC" id="2.6.1.22" evidence="1"/>
<dbReference type="EMBL" id="L32961">
    <property type="protein sequence ID" value="AAA74449.1"/>
    <property type="molecule type" value="mRNA"/>
</dbReference>
<dbReference type="EMBL" id="U80226">
    <property type="protein sequence ID" value="AAB38510.1"/>
    <property type="molecule type" value="mRNA"/>
</dbReference>
<dbReference type="EMBL" id="AK290501">
    <property type="protein sequence ID" value="BAF83190.1"/>
    <property type="molecule type" value="mRNA"/>
</dbReference>
<dbReference type="EMBL" id="BC015628">
    <property type="protein sequence ID" value="AAH15628.1"/>
    <property type="molecule type" value="mRNA"/>
</dbReference>
<dbReference type="EMBL" id="BC031413">
    <property type="protein sequence ID" value="AAH31413.1"/>
    <property type="molecule type" value="mRNA"/>
</dbReference>
<dbReference type="EMBL" id="S75578">
    <property type="protein sequence ID" value="AAD14176.1"/>
    <property type="molecule type" value="mRNA"/>
</dbReference>
<dbReference type="CCDS" id="CCDS10534.1"/>
<dbReference type="PIR" id="JC4022">
    <property type="entry name" value="JC4022"/>
</dbReference>
<dbReference type="PIR" id="S67470">
    <property type="entry name" value="S67470"/>
</dbReference>
<dbReference type="RefSeq" id="NP_000654.2">
    <property type="nucleotide sequence ID" value="NM_000663.4"/>
</dbReference>
<dbReference type="RefSeq" id="NP_001120920.1">
    <property type="nucleotide sequence ID" value="NM_001127448.2"/>
</dbReference>
<dbReference type="RefSeq" id="NP_001373529.1">
    <property type="nucleotide sequence ID" value="NM_001386600.1"/>
</dbReference>
<dbReference type="RefSeq" id="NP_001373530.1">
    <property type="nucleotide sequence ID" value="NM_001386601.1"/>
</dbReference>
<dbReference type="RefSeq" id="NP_001373531.1">
    <property type="nucleotide sequence ID" value="NM_001386602.1"/>
</dbReference>
<dbReference type="RefSeq" id="NP_001373532.1">
    <property type="nucleotide sequence ID" value="NM_001386603.1"/>
</dbReference>
<dbReference type="RefSeq" id="NP_001373533.1">
    <property type="nucleotide sequence ID" value="NM_001386604.1"/>
</dbReference>
<dbReference type="RefSeq" id="NP_065737.2">
    <property type="nucleotide sequence ID" value="NM_020686.5"/>
</dbReference>
<dbReference type="RefSeq" id="XP_011520702.1">
    <property type="nucleotide sequence ID" value="XM_011522400.2"/>
</dbReference>
<dbReference type="RefSeq" id="XP_011520703.1">
    <property type="nucleotide sequence ID" value="XM_011522401.2"/>
</dbReference>
<dbReference type="RefSeq" id="XP_047289641.1">
    <property type="nucleotide sequence ID" value="XM_047433685.1"/>
</dbReference>
<dbReference type="RefSeq" id="XP_047289642.1">
    <property type="nucleotide sequence ID" value="XM_047433686.1"/>
</dbReference>
<dbReference type="RefSeq" id="XP_047289643.1">
    <property type="nucleotide sequence ID" value="XM_047433687.1"/>
</dbReference>
<dbReference type="RefSeq" id="XP_047289644.1">
    <property type="nucleotide sequence ID" value="XM_047433688.1"/>
</dbReference>
<dbReference type="RefSeq" id="XP_054235700.1">
    <property type="nucleotide sequence ID" value="XM_054379725.1"/>
</dbReference>
<dbReference type="RefSeq" id="XP_054235701.1">
    <property type="nucleotide sequence ID" value="XM_054379726.1"/>
</dbReference>
<dbReference type="RefSeq" id="XP_054235702.1">
    <property type="nucleotide sequence ID" value="XM_054379727.1"/>
</dbReference>
<dbReference type="RefSeq" id="XP_054235703.1">
    <property type="nucleotide sequence ID" value="XM_054379728.1"/>
</dbReference>
<dbReference type="SMR" id="P80404"/>
<dbReference type="BioGRID" id="106536">
    <property type="interactions" value="76"/>
</dbReference>
<dbReference type="CORUM" id="P80404"/>
<dbReference type="FunCoup" id="P80404">
    <property type="interactions" value="818"/>
</dbReference>
<dbReference type="IntAct" id="P80404">
    <property type="interactions" value="13"/>
</dbReference>
<dbReference type="MINT" id="P80404"/>
<dbReference type="STRING" id="9606.ENSP00000379845"/>
<dbReference type="BindingDB" id="P80404"/>
<dbReference type="ChEMBL" id="CHEMBL2044"/>
<dbReference type="DrugBank" id="DB01699">
    <property type="generic name" value="(4e)-4-Aminohex-4-Enoic Acid"/>
</dbReference>
<dbReference type="DrugBank" id="DB04235">
    <property type="generic name" value="4-Amino Hexanoic Acid"/>
</dbReference>
<dbReference type="DrugBank" id="DB14511">
    <property type="generic name" value="Acetate"/>
</dbReference>
<dbReference type="DrugBank" id="DB00160">
    <property type="generic name" value="Alanine"/>
</dbReference>
<dbReference type="DrugBank" id="DB17919">
    <property type="generic name" value="CPP-115 free base"/>
</dbReference>
<dbReference type="DrugBank" id="DB00142">
    <property type="generic name" value="Glutamic acid"/>
</dbReference>
<dbReference type="DrugBank" id="DB08849">
    <property type="generic name" value="Nipecotic acid"/>
</dbReference>
<dbReference type="DrugBank" id="DB03940">
    <property type="generic name" value="Oxamic Acid"/>
</dbReference>
<dbReference type="DrugBank" id="DB03560">
    <property type="generic name" value="P-Hydroxybenzaldehyde"/>
</dbReference>
<dbReference type="DrugBank" id="DB00780">
    <property type="generic name" value="Phenelzine"/>
</dbReference>
<dbReference type="DrugBank" id="DB00114">
    <property type="generic name" value="Pyridoxal phosphate"/>
</dbReference>
<dbReference type="DrugBank" id="DB00119">
    <property type="generic name" value="Pyruvic acid"/>
</dbReference>
<dbReference type="DrugBank" id="DB00313">
    <property type="generic name" value="Valproic acid"/>
</dbReference>
<dbReference type="DrugBank" id="DB01080">
    <property type="generic name" value="Vigabatrin"/>
</dbReference>
<dbReference type="DrugCentral" id="P80404"/>
<dbReference type="GuidetoPHARMACOLOGY" id="2464"/>
<dbReference type="iPTMnet" id="P80404"/>
<dbReference type="PhosphoSitePlus" id="P80404"/>
<dbReference type="SwissPalm" id="P80404"/>
<dbReference type="BioMuta" id="ABAT"/>
<dbReference type="DMDM" id="48429239"/>
<dbReference type="CPTAC" id="CPTAC-3"/>
<dbReference type="CPTAC" id="CPTAC-4"/>
<dbReference type="jPOST" id="P80404"/>
<dbReference type="MassIVE" id="P80404"/>
<dbReference type="PaxDb" id="9606-ENSP00000379845"/>
<dbReference type="PeptideAtlas" id="P80404"/>
<dbReference type="ProteomicsDB" id="57683"/>
<dbReference type="Pumba" id="P80404"/>
<dbReference type="Antibodypedia" id="24533">
    <property type="antibodies" value="395 antibodies from 30 providers"/>
</dbReference>
<dbReference type="DNASU" id="18"/>
<dbReference type="Ensembl" id="ENST00000268251.13">
    <property type="protein sequence ID" value="ENSP00000268251.8"/>
    <property type="gene ID" value="ENSG00000183044.12"/>
</dbReference>
<dbReference type="Ensembl" id="ENST00000396600.6">
    <property type="protein sequence ID" value="ENSP00000379845.2"/>
    <property type="gene ID" value="ENSG00000183044.12"/>
</dbReference>
<dbReference type="Ensembl" id="ENST00000425191.6">
    <property type="protein sequence ID" value="ENSP00000411916.2"/>
    <property type="gene ID" value="ENSG00000183044.12"/>
</dbReference>
<dbReference type="GeneID" id="18"/>
<dbReference type="KEGG" id="hsa:18"/>
<dbReference type="MANE-Select" id="ENST00000268251.13">
    <property type="protein sequence ID" value="ENSP00000268251.8"/>
    <property type="RefSeq nucleotide sequence ID" value="NM_020686.6"/>
    <property type="RefSeq protein sequence ID" value="NP_065737.2"/>
</dbReference>
<dbReference type="AGR" id="HGNC:23"/>
<dbReference type="CTD" id="18"/>
<dbReference type="DisGeNET" id="18"/>
<dbReference type="GeneCards" id="ABAT"/>
<dbReference type="HGNC" id="HGNC:23">
    <property type="gene designation" value="ABAT"/>
</dbReference>
<dbReference type="HPA" id="ENSG00000183044">
    <property type="expression patterns" value="Tissue enhanced (brain, kidney, liver, pancreas)"/>
</dbReference>
<dbReference type="MalaCards" id="ABAT"/>
<dbReference type="MIM" id="137150">
    <property type="type" value="gene"/>
</dbReference>
<dbReference type="MIM" id="613163">
    <property type="type" value="phenotype"/>
</dbReference>
<dbReference type="neXtProt" id="NX_P80404"/>
<dbReference type="OpenTargets" id="ENSG00000183044"/>
<dbReference type="Orphanet" id="2066">
    <property type="disease" value="Gamma-aminobutyric acid transaminase deficiency"/>
</dbReference>
<dbReference type="PharmGKB" id="PA24372"/>
<dbReference type="VEuPathDB" id="HostDB:ENSG00000183044"/>
<dbReference type="eggNOG" id="KOG1405">
    <property type="taxonomic scope" value="Eukaryota"/>
</dbReference>
<dbReference type="GeneTree" id="ENSGT00550000074885"/>
<dbReference type="HOGENOM" id="CLU_016922_12_1_1"/>
<dbReference type="InParanoid" id="P80404"/>
<dbReference type="OMA" id="GLMCAFD"/>
<dbReference type="OrthoDB" id="5419315at2759"/>
<dbReference type="PAN-GO" id="P80404">
    <property type="GO annotations" value="3 GO annotations based on evolutionary models"/>
</dbReference>
<dbReference type="PhylomeDB" id="P80404"/>
<dbReference type="TreeFam" id="TF105021"/>
<dbReference type="BioCyc" id="MetaCyc:HS02477-MONOMER"/>
<dbReference type="BRENDA" id="2.6.1.19">
    <property type="organism ID" value="2681"/>
</dbReference>
<dbReference type="PathwayCommons" id="P80404"/>
<dbReference type="Reactome" id="R-HSA-916853">
    <property type="pathway name" value="Degradation of GABA"/>
</dbReference>
<dbReference type="SABIO-RK" id="P80404"/>
<dbReference type="SignaLink" id="P80404"/>
<dbReference type="BioGRID-ORCS" id="18">
    <property type="hits" value="10 hits in 1162 CRISPR screens"/>
</dbReference>
<dbReference type="ChiTaRS" id="ABAT">
    <property type="organism name" value="human"/>
</dbReference>
<dbReference type="GenomeRNAi" id="18"/>
<dbReference type="Pharos" id="P80404">
    <property type="development level" value="Tclin"/>
</dbReference>
<dbReference type="PRO" id="PR:P80404"/>
<dbReference type="Proteomes" id="UP000005640">
    <property type="component" value="Chromosome 16"/>
</dbReference>
<dbReference type="RNAct" id="P80404">
    <property type="molecule type" value="protein"/>
</dbReference>
<dbReference type="Bgee" id="ENSG00000183044">
    <property type="expression patterns" value="Expressed in Brodmann (1909) area 23 and 201 other cell types or tissues"/>
</dbReference>
<dbReference type="ExpressionAtlas" id="P80404">
    <property type="expression patterns" value="baseline and differential"/>
</dbReference>
<dbReference type="GO" id="GO:0032144">
    <property type="term" value="C:4-aminobutyrate transaminase complex"/>
    <property type="evidence" value="ECO:0000314"/>
    <property type="project" value="UniProtKB"/>
</dbReference>
<dbReference type="GO" id="GO:0005759">
    <property type="term" value="C:mitochondrial matrix"/>
    <property type="evidence" value="ECO:0000304"/>
    <property type="project" value="Reactome"/>
</dbReference>
<dbReference type="GO" id="GO:0005739">
    <property type="term" value="C:mitochondrion"/>
    <property type="evidence" value="ECO:0000314"/>
    <property type="project" value="LIFEdb"/>
</dbReference>
<dbReference type="GO" id="GO:0047298">
    <property type="term" value="F:(S)-3-amino-2-methylpropionate transaminase activity"/>
    <property type="evidence" value="ECO:0007669"/>
    <property type="project" value="UniProtKB-EC"/>
</dbReference>
<dbReference type="GO" id="GO:0034386">
    <property type="term" value="F:4-aminobutyrate:2-oxoglutarate transaminase activity"/>
    <property type="evidence" value="ECO:0000314"/>
    <property type="project" value="FlyBase"/>
</dbReference>
<dbReference type="GO" id="GO:0042802">
    <property type="term" value="F:identical protein binding"/>
    <property type="evidence" value="ECO:0000353"/>
    <property type="project" value="UniProtKB"/>
</dbReference>
<dbReference type="GO" id="GO:0051536">
    <property type="term" value="F:iron-sulfur cluster binding"/>
    <property type="evidence" value="ECO:0007669"/>
    <property type="project" value="UniProtKB-KW"/>
</dbReference>
<dbReference type="GO" id="GO:0046872">
    <property type="term" value="F:metal ion binding"/>
    <property type="evidence" value="ECO:0007669"/>
    <property type="project" value="UniProtKB-KW"/>
</dbReference>
<dbReference type="GO" id="GO:0030170">
    <property type="term" value="F:pyridoxal phosphate binding"/>
    <property type="evidence" value="ECO:0000314"/>
    <property type="project" value="UniProtKB"/>
</dbReference>
<dbReference type="GO" id="GO:0032145">
    <property type="term" value="F:succinate-semialdehyde dehydrogenase binding"/>
    <property type="evidence" value="ECO:0000250"/>
    <property type="project" value="UniProtKB"/>
</dbReference>
<dbReference type="GO" id="GO:0021549">
    <property type="term" value="P:cerebellum development"/>
    <property type="evidence" value="ECO:0007669"/>
    <property type="project" value="Ensembl"/>
</dbReference>
<dbReference type="GO" id="GO:0007620">
    <property type="term" value="P:copulation"/>
    <property type="evidence" value="ECO:0007669"/>
    <property type="project" value="Ensembl"/>
</dbReference>
<dbReference type="GO" id="GO:0035640">
    <property type="term" value="P:exploration behavior"/>
    <property type="evidence" value="ECO:0007669"/>
    <property type="project" value="Ensembl"/>
</dbReference>
<dbReference type="GO" id="GO:0009449">
    <property type="term" value="P:gamma-aminobutyric acid biosynthetic process"/>
    <property type="evidence" value="ECO:0007669"/>
    <property type="project" value="Ensembl"/>
</dbReference>
<dbReference type="GO" id="GO:0009450">
    <property type="term" value="P:gamma-aminobutyric acid catabolic process"/>
    <property type="evidence" value="ECO:0000318"/>
    <property type="project" value="GO_Central"/>
</dbReference>
<dbReference type="GO" id="GO:0009448">
    <property type="term" value="P:gamma-aminobutyric acid metabolic process"/>
    <property type="evidence" value="ECO:0000314"/>
    <property type="project" value="UniProtKB"/>
</dbReference>
<dbReference type="GO" id="GO:0007626">
    <property type="term" value="P:locomotory behavior"/>
    <property type="evidence" value="ECO:0007669"/>
    <property type="project" value="Ensembl"/>
</dbReference>
<dbReference type="GO" id="GO:0045776">
    <property type="term" value="P:negative regulation of blood pressure"/>
    <property type="evidence" value="ECO:0007669"/>
    <property type="project" value="Ensembl"/>
</dbReference>
<dbReference type="GO" id="GO:0033602">
    <property type="term" value="P:negative regulation of dopamine secretion"/>
    <property type="evidence" value="ECO:0007669"/>
    <property type="project" value="Ensembl"/>
</dbReference>
<dbReference type="GO" id="GO:0014053">
    <property type="term" value="P:negative regulation of gamma-aminobutyric acid secretion"/>
    <property type="evidence" value="ECO:0007669"/>
    <property type="project" value="Ensembl"/>
</dbReference>
<dbReference type="GO" id="GO:0050877">
    <property type="term" value="P:nervous system process"/>
    <property type="evidence" value="ECO:0000250"/>
    <property type="project" value="UniProtKB"/>
</dbReference>
<dbReference type="GO" id="GO:1904450">
    <property type="term" value="P:positive regulation of aspartate secretion"/>
    <property type="evidence" value="ECO:0007669"/>
    <property type="project" value="Ensembl"/>
</dbReference>
<dbReference type="GO" id="GO:0045964">
    <property type="term" value="P:positive regulation of dopamine metabolic process"/>
    <property type="evidence" value="ECO:0007669"/>
    <property type="project" value="Ensembl"/>
</dbReference>
<dbReference type="GO" id="GO:0031652">
    <property type="term" value="P:positive regulation of heat generation"/>
    <property type="evidence" value="ECO:0007669"/>
    <property type="project" value="Ensembl"/>
</dbReference>
<dbReference type="GO" id="GO:0097151">
    <property type="term" value="P:positive regulation of inhibitory postsynaptic potential"/>
    <property type="evidence" value="ECO:0007669"/>
    <property type="project" value="Ensembl"/>
</dbReference>
<dbReference type="GO" id="GO:0032024">
    <property type="term" value="P:positive regulation of insulin secretion"/>
    <property type="evidence" value="ECO:0007669"/>
    <property type="project" value="Ensembl"/>
</dbReference>
<dbReference type="GO" id="GO:1902722">
    <property type="term" value="P:positive regulation of prolactin secretion"/>
    <property type="evidence" value="ECO:0007669"/>
    <property type="project" value="Ensembl"/>
</dbReference>
<dbReference type="GO" id="GO:0070474">
    <property type="term" value="P:positive regulation of uterine smooth muscle contraction"/>
    <property type="evidence" value="ECO:0007669"/>
    <property type="project" value="Ensembl"/>
</dbReference>
<dbReference type="GO" id="GO:0042220">
    <property type="term" value="P:response to cocaine"/>
    <property type="evidence" value="ECO:0007669"/>
    <property type="project" value="Ensembl"/>
</dbReference>
<dbReference type="GO" id="GO:0045471">
    <property type="term" value="P:response to ethanol"/>
    <property type="evidence" value="ECO:0007669"/>
    <property type="project" value="Ensembl"/>
</dbReference>
<dbReference type="GO" id="GO:0001666">
    <property type="term" value="P:response to hypoxia"/>
    <property type="evidence" value="ECO:0007669"/>
    <property type="project" value="Ensembl"/>
</dbReference>
<dbReference type="GO" id="GO:0010039">
    <property type="term" value="P:response to iron ion"/>
    <property type="evidence" value="ECO:0007669"/>
    <property type="project" value="Ensembl"/>
</dbReference>
<dbReference type="GO" id="GO:0035094">
    <property type="term" value="P:response to nicotine"/>
    <property type="evidence" value="ECO:0007669"/>
    <property type="project" value="Ensembl"/>
</dbReference>
<dbReference type="GO" id="GO:0009410">
    <property type="term" value="P:response to xenobiotic stimulus"/>
    <property type="evidence" value="ECO:0007669"/>
    <property type="project" value="Ensembl"/>
</dbReference>
<dbReference type="CDD" id="cd00610">
    <property type="entry name" value="OAT_like"/>
    <property type="match status" value="1"/>
</dbReference>
<dbReference type="FunFam" id="3.40.640.10:FF:000029">
    <property type="entry name" value="4-aminobutyrate aminotransferase, mitochondrial"/>
    <property type="match status" value="1"/>
</dbReference>
<dbReference type="FunFam" id="3.90.1150.10:FF:000191">
    <property type="entry name" value="4-aminobutyrate aminotransferase, mitochondrial"/>
    <property type="match status" value="2"/>
</dbReference>
<dbReference type="Gene3D" id="3.90.1150.10">
    <property type="entry name" value="Aspartate Aminotransferase, domain 1"/>
    <property type="match status" value="1"/>
</dbReference>
<dbReference type="Gene3D" id="3.40.640.10">
    <property type="entry name" value="Type I PLP-dependent aspartate aminotransferase-like (Major domain)"/>
    <property type="match status" value="1"/>
</dbReference>
<dbReference type="InterPro" id="IPR004631">
    <property type="entry name" value="4NH2But_aminotransferase_euk"/>
</dbReference>
<dbReference type="InterPro" id="IPR005814">
    <property type="entry name" value="Aminotrans_3"/>
</dbReference>
<dbReference type="InterPro" id="IPR049704">
    <property type="entry name" value="Aminotrans_3_PPA_site"/>
</dbReference>
<dbReference type="InterPro" id="IPR015424">
    <property type="entry name" value="PyrdxlP-dep_Trfase"/>
</dbReference>
<dbReference type="InterPro" id="IPR015421">
    <property type="entry name" value="PyrdxlP-dep_Trfase_major"/>
</dbReference>
<dbReference type="InterPro" id="IPR015422">
    <property type="entry name" value="PyrdxlP-dep_Trfase_small"/>
</dbReference>
<dbReference type="NCBIfam" id="TIGR00699">
    <property type="entry name" value="GABAtrns_euk"/>
    <property type="match status" value="1"/>
</dbReference>
<dbReference type="PANTHER" id="PTHR43206:SF1">
    <property type="entry name" value="4-AMINOBUTYRATE AMINOTRANSFERASE, MITOCHONDRIAL"/>
    <property type="match status" value="1"/>
</dbReference>
<dbReference type="PANTHER" id="PTHR43206">
    <property type="entry name" value="AMINOTRANSFERASE"/>
    <property type="match status" value="1"/>
</dbReference>
<dbReference type="Pfam" id="PF00202">
    <property type="entry name" value="Aminotran_3"/>
    <property type="match status" value="1"/>
</dbReference>
<dbReference type="PIRSF" id="PIRSF000521">
    <property type="entry name" value="Transaminase_4ab_Lys_Orn"/>
    <property type="match status" value="1"/>
</dbReference>
<dbReference type="SUPFAM" id="SSF53383">
    <property type="entry name" value="PLP-dependent transferases"/>
    <property type="match status" value="1"/>
</dbReference>
<dbReference type="PROSITE" id="PS00600">
    <property type="entry name" value="AA_TRANSFER_CLASS_3"/>
    <property type="match status" value="1"/>
</dbReference>
<gene>
    <name evidence="10" type="primary">ABAT</name>
    <name type="synonym">GABAT</name>
</gene>
<reference key="1">
    <citation type="journal article" date="1995" name="Gene">
        <title>Screening and sequence determination of a cDNA encoding the human brain 4-aminobutyrate aminotransferase.</title>
        <authorList>
            <person name="Osei Y.D."/>
            <person name="Churchich J.E."/>
        </authorList>
    </citation>
    <scope>NUCLEOTIDE SEQUENCE [MRNA]</scope>
    <source>
        <tissue>Brain</tissue>
    </source>
</reference>
<reference key="2">
    <citation type="submission" date="1996-11" db="EMBL/GenBank/DDBJ databases">
        <authorList>
            <person name="Medina-Kauwe L.K."/>
            <person name="Gibson K.M."/>
            <person name="Nyhan W.L."/>
            <person name="Tobin A.J."/>
        </authorList>
    </citation>
    <scope>NUCLEOTIDE SEQUENCE [MRNA]</scope>
    <source>
        <tissue>Pancreatic islet</tissue>
    </source>
</reference>
<reference key="3">
    <citation type="journal article" date="2004" name="Nat. Genet.">
        <title>Complete sequencing and characterization of 21,243 full-length human cDNAs.</title>
        <authorList>
            <person name="Ota T."/>
            <person name="Suzuki Y."/>
            <person name="Nishikawa T."/>
            <person name="Otsuki T."/>
            <person name="Sugiyama T."/>
            <person name="Irie R."/>
            <person name="Wakamatsu A."/>
            <person name="Hayashi K."/>
            <person name="Sato H."/>
            <person name="Nagai K."/>
            <person name="Kimura K."/>
            <person name="Makita H."/>
            <person name="Sekine M."/>
            <person name="Obayashi M."/>
            <person name="Nishi T."/>
            <person name="Shibahara T."/>
            <person name="Tanaka T."/>
            <person name="Ishii S."/>
            <person name="Yamamoto J."/>
            <person name="Saito K."/>
            <person name="Kawai Y."/>
            <person name="Isono Y."/>
            <person name="Nakamura Y."/>
            <person name="Nagahari K."/>
            <person name="Murakami K."/>
            <person name="Yasuda T."/>
            <person name="Iwayanagi T."/>
            <person name="Wagatsuma M."/>
            <person name="Shiratori A."/>
            <person name="Sudo H."/>
            <person name="Hosoiri T."/>
            <person name="Kaku Y."/>
            <person name="Kodaira H."/>
            <person name="Kondo H."/>
            <person name="Sugawara M."/>
            <person name="Takahashi M."/>
            <person name="Kanda K."/>
            <person name="Yokoi T."/>
            <person name="Furuya T."/>
            <person name="Kikkawa E."/>
            <person name="Omura Y."/>
            <person name="Abe K."/>
            <person name="Kamihara K."/>
            <person name="Katsuta N."/>
            <person name="Sato K."/>
            <person name="Tanikawa M."/>
            <person name="Yamazaki M."/>
            <person name="Ninomiya K."/>
            <person name="Ishibashi T."/>
            <person name="Yamashita H."/>
            <person name="Murakawa K."/>
            <person name="Fujimori K."/>
            <person name="Tanai H."/>
            <person name="Kimata M."/>
            <person name="Watanabe M."/>
            <person name="Hiraoka S."/>
            <person name="Chiba Y."/>
            <person name="Ishida S."/>
            <person name="Ono Y."/>
            <person name="Takiguchi S."/>
            <person name="Watanabe S."/>
            <person name="Yosida M."/>
            <person name="Hotuta T."/>
            <person name="Kusano J."/>
            <person name="Kanehori K."/>
            <person name="Takahashi-Fujii A."/>
            <person name="Hara H."/>
            <person name="Tanase T.-O."/>
            <person name="Nomura Y."/>
            <person name="Togiya S."/>
            <person name="Komai F."/>
            <person name="Hara R."/>
            <person name="Takeuchi K."/>
            <person name="Arita M."/>
            <person name="Imose N."/>
            <person name="Musashino K."/>
            <person name="Yuuki H."/>
            <person name="Oshima A."/>
            <person name="Sasaki N."/>
            <person name="Aotsuka S."/>
            <person name="Yoshikawa Y."/>
            <person name="Matsunawa H."/>
            <person name="Ichihara T."/>
            <person name="Shiohata N."/>
            <person name="Sano S."/>
            <person name="Moriya S."/>
            <person name="Momiyama H."/>
            <person name="Satoh N."/>
            <person name="Takami S."/>
            <person name="Terashima Y."/>
            <person name="Suzuki O."/>
            <person name="Nakagawa S."/>
            <person name="Senoh A."/>
            <person name="Mizoguchi H."/>
            <person name="Goto Y."/>
            <person name="Shimizu F."/>
            <person name="Wakebe H."/>
            <person name="Hishigaki H."/>
            <person name="Watanabe T."/>
            <person name="Sugiyama A."/>
            <person name="Takemoto M."/>
            <person name="Kawakami B."/>
            <person name="Yamazaki M."/>
            <person name="Watanabe K."/>
            <person name="Kumagai A."/>
            <person name="Itakura S."/>
            <person name="Fukuzumi Y."/>
            <person name="Fujimori Y."/>
            <person name="Komiyama M."/>
            <person name="Tashiro H."/>
            <person name="Tanigami A."/>
            <person name="Fujiwara T."/>
            <person name="Ono T."/>
            <person name="Yamada K."/>
            <person name="Fujii Y."/>
            <person name="Ozaki K."/>
            <person name="Hirao M."/>
            <person name="Ohmori Y."/>
            <person name="Kawabata A."/>
            <person name="Hikiji T."/>
            <person name="Kobatake N."/>
            <person name="Inagaki H."/>
            <person name="Ikema Y."/>
            <person name="Okamoto S."/>
            <person name="Okitani R."/>
            <person name="Kawakami T."/>
            <person name="Noguchi S."/>
            <person name="Itoh T."/>
            <person name="Shigeta K."/>
            <person name="Senba T."/>
            <person name="Matsumura K."/>
            <person name="Nakajima Y."/>
            <person name="Mizuno T."/>
            <person name="Morinaga M."/>
            <person name="Sasaki M."/>
            <person name="Togashi T."/>
            <person name="Oyama M."/>
            <person name="Hata H."/>
            <person name="Watanabe M."/>
            <person name="Komatsu T."/>
            <person name="Mizushima-Sugano J."/>
            <person name="Satoh T."/>
            <person name="Shirai Y."/>
            <person name="Takahashi Y."/>
            <person name="Nakagawa K."/>
            <person name="Okumura K."/>
            <person name="Nagase T."/>
            <person name="Nomura N."/>
            <person name="Kikuchi H."/>
            <person name="Masuho Y."/>
            <person name="Yamashita R."/>
            <person name="Nakai K."/>
            <person name="Yada T."/>
            <person name="Nakamura Y."/>
            <person name="Ohara O."/>
            <person name="Isogai T."/>
            <person name="Sugano S."/>
        </authorList>
    </citation>
    <scope>NUCLEOTIDE SEQUENCE [LARGE SCALE MRNA]</scope>
    <source>
        <tissue>Brain</tissue>
    </source>
</reference>
<reference key="4">
    <citation type="journal article" date="2004" name="Genome Res.">
        <title>The status, quality, and expansion of the NIH full-length cDNA project: the Mammalian Gene Collection (MGC).</title>
        <authorList>
            <consortium name="The MGC Project Team"/>
        </authorList>
    </citation>
    <scope>NUCLEOTIDE SEQUENCE [LARGE SCALE MRNA]</scope>
    <scope>VARIANT ARG-56</scope>
    <source>
        <tissue>Brain</tissue>
        <tissue>Eye</tissue>
    </source>
</reference>
<reference key="5">
    <citation type="journal article" date="1995" name="Eur. J. Biochem.">
        <title>Primary structure and tissue distribution of human 4-aminobutyrate aminotransferase.</title>
        <authorList>
            <person name="de Biase D."/>
            <person name="Barra D."/>
            <person name="Simmaco M."/>
            <person name="John R.A."/>
            <person name="Bossa F."/>
        </authorList>
    </citation>
    <scope>NUCLEOTIDE SEQUENCE [MRNA] OF 36-485</scope>
    <scope>PARTIAL PROTEIN SEQUENCE</scope>
    <scope>TISSUE SPECIFICITY</scope>
    <source>
        <tissue>Liver</tissue>
    </source>
</reference>
<reference key="6">
    <citation type="journal article" date="2004" name="Mol. Cells">
        <title>Cysteine-321 of human brain GABA transaminase is involved in intersubunit cross-linking.</title>
        <authorList>
            <person name="Yoon C.S."/>
            <person name="Kim D.W."/>
            <person name="Jang S.H."/>
            <person name="Lee B.R."/>
            <person name="Choi H.S."/>
            <person name="Choi S.H."/>
            <person name="Kim S.Y."/>
            <person name="An J.J."/>
            <person name="Kwon O.S."/>
            <person name="Kang T.C."/>
            <person name="Won M.H."/>
            <person name="Cho S.W."/>
            <person name="Lee K.S."/>
            <person name="Park J."/>
            <person name="Eum W.S."/>
            <person name="Choi S.Y."/>
        </authorList>
    </citation>
    <scope>SUBUNIT</scope>
    <scope>INTERCHAIN DISULFIDE BOND</scope>
    <scope>MUTAGENESIS OF CYS-321</scope>
    <scope>CATALYTIC ACTIVITY</scope>
    <scope>FUNCTION</scope>
</reference>
<reference key="7">
    <citation type="journal article" date="2011" name="BMC Syst. Biol.">
        <title>Initial characterization of the human central proteome.</title>
        <authorList>
            <person name="Burkard T.R."/>
            <person name="Planyavsky M."/>
            <person name="Kaupe I."/>
            <person name="Breitwieser F.P."/>
            <person name="Buerckstuemmer T."/>
            <person name="Bennett K.L."/>
            <person name="Superti-Furga G."/>
            <person name="Colinge J."/>
        </authorList>
    </citation>
    <scope>IDENTIFICATION BY MASS SPECTROMETRY [LARGE SCALE ANALYSIS]</scope>
</reference>
<reference key="8">
    <citation type="journal article" date="2014" name="J. Proteomics">
        <title>An enzyme assisted RP-RPLC approach for in-depth analysis of human liver phosphoproteome.</title>
        <authorList>
            <person name="Bian Y."/>
            <person name="Song C."/>
            <person name="Cheng K."/>
            <person name="Dong M."/>
            <person name="Wang F."/>
            <person name="Huang J."/>
            <person name="Sun D."/>
            <person name="Wang L."/>
            <person name="Ye M."/>
            <person name="Zou H."/>
        </authorList>
    </citation>
    <scope>IDENTIFICATION BY MASS SPECTROMETRY [LARGE SCALE ANALYSIS]</scope>
    <source>
        <tissue>Liver</tissue>
    </source>
</reference>
<reference key="9">
    <citation type="journal article" date="1999" name="J. Inherit. Metab. Dis.">
        <title>4-aminobutyrate aminotransferase (GABA-transaminase) deficiency.</title>
        <authorList>
            <person name="Medina-Kauwe L.K."/>
            <person name="Tobin A.J."/>
            <person name="De Meirleir L."/>
            <person name="Jaeken J."/>
            <person name="Jakobs C."/>
            <person name="Nyhan W.L."/>
            <person name="Gibson K.M."/>
        </authorList>
    </citation>
    <scope>VARIANT GABATD LYS-220</scope>
    <scope>CATALYTIC ACTIVITY</scope>
    <scope>FUNCTION</scope>
</reference>
<sequence length="500" mass="56439">MASMLLAQRLACSFQHSYRLLVPGSRHISQAAAKVDVEFDYDGPLMKTEVPGPRSQELMKQLNIIQNAEAVHFFCNYEESRGNYLVDVDGNRMLDLYSQISSVPIGYSHPALLKLIQQPQNASMFVNRPALGILPPENFVEKLRQSLLSVAPKGMSQLITMACGSCSNENALKTIFMWYRSKERGQRGFSQEELETCMINQAPGCPDYSILSFMGAFHGRTMGCLATTHSKAIHKIDIPSFDWPIAPFPRLKYPLEEFVKENQQEEARCLEEVEDLIVKYRKKKKTVAGIIVEPIQSEGGDNHASDDFFRKLRDIARKHGCAFLVDEVQTGGGCTGKFWAHEHWGLDDPADVMTFSKKMMTGGFFHKEEFRPNAPYRIFNTWLGDPSKNLLLAEVINIIKREDLLNNAAHAGKALLTGLLDLQARYPQFISRVRGRGTFCSFDTPDDSIRNKLILIARNKGVVLGGCGDKSIRFRPTLVFRDHHAHLFLNIFSDILADFK</sequence>
<proteinExistence type="evidence at protein level"/>
<organism>
    <name type="scientific">Homo sapiens</name>
    <name type="common">Human</name>
    <dbReference type="NCBI Taxonomy" id="9606"/>
    <lineage>
        <taxon>Eukaryota</taxon>
        <taxon>Metazoa</taxon>
        <taxon>Chordata</taxon>
        <taxon>Craniata</taxon>
        <taxon>Vertebrata</taxon>
        <taxon>Euteleostomi</taxon>
        <taxon>Mammalia</taxon>
        <taxon>Eutheria</taxon>
        <taxon>Euarchontoglires</taxon>
        <taxon>Primates</taxon>
        <taxon>Haplorrhini</taxon>
        <taxon>Catarrhini</taxon>
        <taxon>Hominidae</taxon>
        <taxon>Homo</taxon>
    </lineage>
</organism>
<name>GABT_HUMAN</name>
<comment type="function">
    <text evidence="1 4 6">Catalyzes the conversion of gamma-aminobutyrate and L-beta-aminoisobutyrate to succinate semialdehyde and methylmalonate semialdehyde, respectively (PubMed:10407778, PubMed:15528998). Can also convert delta-aminovalerate and beta-alanine (By similarity).</text>
</comment>
<comment type="catalytic activity">
    <reaction evidence="4 6">
        <text>4-aminobutanoate + 2-oxoglutarate = succinate semialdehyde + L-glutamate</text>
        <dbReference type="Rhea" id="RHEA:23352"/>
        <dbReference type="ChEBI" id="CHEBI:16810"/>
        <dbReference type="ChEBI" id="CHEBI:29985"/>
        <dbReference type="ChEBI" id="CHEBI:57706"/>
        <dbReference type="ChEBI" id="CHEBI:59888"/>
        <dbReference type="EC" id="2.6.1.19"/>
    </reaction>
    <physiologicalReaction direction="left-to-right" evidence="4 9">
        <dbReference type="Rhea" id="RHEA:23353"/>
    </physiologicalReaction>
</comment>
<comment type="catalytic activity">
    <reaction evidence="1">
        <text>(S)-3-amino-2-methylpropanoate + 2-oxoglutarate = 2-methyl-3-oxopropanoate + L-glutamate</text>
        <dbReference type="Rhea" id="RHEA:13993"/>
        <dbReference type="ChEBI" id="CHEBI:16810"/>
        <dbReference type="ChEBI" id="CHEBI:29985"/>
        <dbReference type="ChEBI" id="CHEBI:57700"/>
        <dbReference type="ChEBI" id="CHEBI:58655"/>
        <dbReference type="EC" id="2.6.1.22"/>
    </reaction>
    <physiologicalReaction direction="left-to-right" evidence="1">
        <dbReference type="Rhea" id="RHEA:13994"/>
    </physiologicalReaction>
</comment>
<comment type="cofactor">
    <cofactor evidence="3">
        <name>pyridoxal 5'-phosphate</name>
        <dbReference type="ChEBI" id="CHEBI:597326"/>
    </cofactor>
    <cofactor evidence="3">
        <name>[2Fe-2S] cluster</name>
        <dbReference type="ChEBI" id="CHEBI:190135"/>
    </cofactor>
    <text evidence="3">Binds 1 [2Fe-2S] cluster per homodimer.</text>
</comment>
<comment type="subunit">
    <text evidence="6">Homodimer; disulfide-linked.</text>
</comment>
<comment type="subcellular location">
    <subcellularLocation>
        <location>Mitochondrion matrix</location>
    </subcellularLocation>
</comment>
<comment type="tissue specificity">
    <text evidence="7">Liver &gt; pancreas &gt; brain &gt; kidney &gt; heart &gt; placenta.</text>
</comment>
<comment type="disease" evidence="4">
    <disease id="DI-01641">
        <name>GABA-transaminase deficiency</name>
        <acronym>GABATD</acronym>
        <description>An enzymatic deficiency resulting in psychomotor retardation, hypotonia, hyperreflexia, lethargy, refractory seizures, and EEG abnormalities. GABATD inheritance is autosomal recessive.</description>
        <dbReference type="MIM" id="613163"/>
    </disease>
    <text>The disease is caused by variants affecting the gene represented in this entry.</text>
</comment>
<comment type="similarity">
    <text evidence="8">Belongs to the class-III pyridoxal-phosphate-dependent aminotransferase family.</text>
</comment>
<protein>
    <recommendedName>
        <fullName>4-aminobutyrate aminotransferase, mitochondrial</fullName>
        <ecNumber evidence="4 6">2.6.1.19</ecNumber>
    </recommendedName>
    <alternativeName>
        <fullName>(S)-3-amino-2-methylpropionate transaminase</fullName>
        <ecNumber evidence="1">2.6.1.22</ecNumber>
    </alternativeName>
    <alternativeName>
        <fullName>GABA aminotransferase</fullName>
        <shortName>GABA-AT</shortName>
    </alternativeName>
    <alternativeName>
        <fullName>Gamma-amino-N-butyrate transaminase</fullName>
        <shortName>GABA transaminase</shortName>
        <shortName>GABA-T</shortName>
    </alternativeName>
    <alternativeName>
        <fullName>L-AIBAT</fullName>
    </alternativeName>
</protein>
<evidence type="ECO:0000250" key="1">
    <source>
        <dbReference type="UniProtKB" id="P50554"/>
    </source>
</evidence>
<evidence type="ECO:0000250" key="2">
    <source>
        <dbReference type="UniProtKB" id="P61922"/>
    </source>
</evidence>
<evidence type="ECO:0000250" key="3">
    <source>
        <dbReference type="UniProtKB" id="P80147"/>
    </source>
</evidence>
<evidence type="ECO:0000269" key="4">
    <source>
    </source>
</evidence>
<evidence type="ECO:0000269" key="5">
    <source>
    </source>
</evidence>
<evidence type="ECO:0000269" key="6">
    <source>
    </source>
</evidence>
<evidence type="ECO:0000269" key="7">
    <source>
    </source>
</evidence>
<evidence type="ECO:0000305" key="8"/>
<evidence type="ECO:0000305" key="9">
    <source>
    </source>
</evidence>
<evidence type="ECO:0000312" key="10">
    <source>
        <dbReference type="HGNC" id="HGNC:23"/>
    </source>
</evidence>
<feature type="transit peptide" description="Mitochondrion">
    <location>
        <begin position="1"/>
        <end position="28"/>
    </location>
</feature>
<feature type="chain" id="PRO_0000001249" description="4-aminobutyrate aminotransferase, mitochondrial">
    <location>
        <begin position="29"/>
        <end position="500"/>
    </location>
</feature>
<feature type="binding site" evidence="3">
    <location>
        <position position="163"/>
    </location>
    <ligand>
        <name>[2Fe-2S] cluster</name>
        <dbReference type="ChEBI" id="CHEBI:190135"/>
        <note>ligand shared between dimeric partners</note>
    </ligand>
</feature>
<feature type="binding site" description="in other chain" evidence="3">
    <location>
        <begin position="164"/>
        <end position="165"/>
    </location>
    <ligand>
        <name>pyridoxal 5'-phosphate</name>
        <dbReference type="ChEBI" id="CHEBI:597326"/>
        <note>ligand shared between dimeric partners</note>
    </ligand>
</feature>
<feature type="binding site" evidence="3">
    <location>
        <position position="166"/>
    </location>
    <ligand>
        <name>[2Fe-2S] cluster</name>
        <dbReference type="ChEBI" id="CHEBI:190135"/>
        <note>ligand shared between dimeric partners</note>
    </ligand>
</feature>
<feature type="binding site" evidence="3">
    <location>
        <position position="220"/>
    </location>
    <ligand>
        <name>substrate</name>
    </ligand>
</feature>
<feature type="binding site" evidence="3">
    <location>
        <position position="381"/>
    </location>
    <ligand>
        <name>pyridoxal 5'-phosphate</name>
        <dbReference type="ChEBI" id="CHEBI:597326"/>
        <note>ligand shared between dimeric partners</note>
    </ligand>
</feature>
<feature type="modified residue" description="N6-succinyllysine" evidence="2">
    <location>
        <position position="231"/>
    </location>
</feature>
<feature type="modified residue" description="N6-acetyllysine; alternate" evidence="2">
    <location>
        <position position="252"/>
    </location>
</feature>
<feature type="modified residue" description="N6-succinyllysine; alternate" evidence="2">
    <location>
        <position position="252"/>
    </location>
</feature>
<feature type="modified residue" description="N6-acetyllysine" evidence="2">
    <location>
        <position position="279"/>
    </location>
</feature>
<feature type="modified residue" description="N6-acetyllysine" evidence="2">
    <location>
        <position position="318"/>
    </location>
</feature>
<feature type="modified residue" description="N6-(pyridoxal phosphate)lysine" evidence="3">
    <location>
        <position position="357"/>
    </location>
</feature>
<feature type="modified residue" description="N6-acetyllysine; alternate" evidence="2">
    <location>
        <position position="413"/>
    </location>
</feature>
<feature type="modified residue" description="N6-succinyllysine; alternate" evidence="2">
    <location>
        <position position="413"/>
    </location>
</feature>
<feature type="modified residue" description="N6-acetyllysine" evidence="2">
    <location>
        <position position="452"/>
    </location>
</feature>
<feature type="modified residue" description="N6-acetyllysine" evidence="2">
    <location>
        <position position="470"/>
    </location>
</feature>
<feature type="disulfide bond" description="Interchain">
    <location>
        <position position="321"/>
    </location>
</feature>
<feature type="sequence variant" id="VAR_018979" description="In dbSNP:rs1731017." evidence="5">
    <original>Q</original>
    <variation>R</variation>
    <location>
        <position position="56"/>
    </location>
</feature>
<feature type="sequence variant" id="VAR_008883" description="In GABATD; 25% reduction in 4-aminobutyrate aminotransferase activity; dbSNP:rs121434578." evidence="4">
    <original>R</original>
    <variation>K</variation>
    <location>
        <position position="220"/>
    </location>
</feature>
<feature type="mutagenesis site" description="Loss of 4-aminobutyrate aminotransferase activity." evidence="6">
    <original>C</original>
    <variation>M</variation>
    <variation>S</variation>
    <variation>A</variation>
    <variation>G</variation>
    <variation>K</variation>
    <location>
        <position position="321"/>
    </location>
</feature>
<feature type="sequence conflict" description="In Ref. 1; AAA74449." evidence="8" ref="1">
    <original>S</original>
    <variation>T</variation>
    <location>
        <position position="17"/>
    </location>
</feature>
<feature type="sequence conflict" description="In Ref. 1; AAA74449." evidence="8" ref="1">
    <original>H</original>
    <variation>D</variation>
    <location>
        <position position="109"/>
    </location>
</feature>
<feature type="sequence conflict" description="In Ref. 1; AAA74449." evidence="8" ref="1">
    <original>L</original>
    <variation>V</variation>
    <location>
        <position position="113"/>
    </location>
</feature>
<feature type="sequence conflict" description="In Ref. 1; AAA74449." evidence="8" ref="1">
    <original>G</original>
    <variation>E</variation>
    <location>
        <position position="132"/>
    </location>
</feature>
<feature type="sequence conflict" description="In Ref. 2; AAB38510." evidence="8" ref="2">
    <original>MSQLITMACGSCSNENA</original>
    <variation>CPSSSPWPACPAPMKTT</variation>
    <location>
        <begin position="155"/>
        <end position="171"/>
    </location>
</feature>
<feature type="sequence conflict" description="In Ref. 1; AAA74449." evidence="8" ref="1">
    <original>Q</original>
    <variation>K</variation>
    <location>
        <position position="191"/>
    </location>
</feature>
<feature type="sequence conflict" description="In Ref. 1; AAA74449." evidence="8" ref="1">
    <original>G</original>
    <variation>W</variation>
    <location>
        <position position="204"/>
    </location>
</feature>
<feature type="sequence conflict" description="In Ref. 1; AAA74449." evidence="8" ref="1">
    <original>A</original>
    <variation>S</variation>
    <location>
        <position position="216"/>
    </location>
</feature>
<feature type="sequence conflict" description="In Ref. 2; AAB38510." evidence="8" ref="2">
    <original>P</original>
    <variation>T</variation>
    <location>
        <position position="247"/>
    </location>
</feature>
<feature type="sequence conflict" description="In Ref. 1; AAA74449." evidence="8" ref="1">
    <original>R</original>
    <variation>G</variation>
    <location>
        <position position="268"/>
    </location>
</feature>
<feature type="sequence conflict" description="In Ref. 1; AAA74449." evidence="8" ref="1">
    <original>G</original>
    <variation>C</variation>
    <location>
        <position position="320"/>
    </location>
</feature>
<feature type="sequence conflict" description="In Ref. 1; AAA74449." evidence="8" ref="1">
    <original>H</original>
    <variation>L</variation>
    <location>
        <position position="366"/>
    </location>
</feature>
<accession>P80404</accession>
<accession>A8K386</accession>
<accession>Q16260</accession>
<accession>Q8N5W2</accession>
<accession>Q96BG2</accession>
<accession>Q99800</accession>
<keyword id="KW-0007">Acetylation</keyword>
<keyword id="KW-0032">Aminotransferase</keyword>
<keyword id="KW-0903">Direct protein sequencing</keyword>
<keyword id="KW-0225">Disease variant</keyword>
<keyword id="KW-1015">Disulfide bond</keyword>
<keyword id="KW-0408">Iron</keyword>
<keyword id="KW-0411">Iron-sulfur</keyword>
<keyword id="KW-0479">Metal-binding</keyword>
<keyword id="KW-0496">Mitochondrion</keyword>
<keyword id="KW-0531">Neurotransmitter degradation</keyword>
<keyword id="KW-1267">Proteomics identification</keyword>
<keyword id="KW-0663">Pyridoxal phosphate</keyword>
<keyword id="KW-1185">Reference proteome</keyword>
<keyword id="KW-0808">Transferase</keyword>
<keyword id="KW-0809">Transit peptide</keyword>